<name>THRC_CRYNH</name>
<organism evidence="7 8">
    <name type="scientific">Cryptococcus neoformans var. grubii serotype A (strain H99 / ATCC 208821 / CBS 10515 / FGSC 9487)</name>
    <name type="common">Filobasidiella neoformans var. grubii</name>
    <dbReference type="NCBI Taxonomy" id="235443"/>
    <lineage>
        <taxon>Eukaryota</taxon>
        <taxon>Fungi</taxon>
        <taxon>Dikarya</taxon>
        <taxon>Basidiomycota</taxon>
        <taxon>Agaricomycotina</taxon>
        <taxon>Tremellomycetes</taxon>
        <taxon>Tremellales</taxon>
        <taxon>Cryptococcaceae</taxon>
        <taxon>Cryptococcus</taxon>
        <taxon>Cryptococcus neoformans species complex</taxon>
    </lineage>
</organism>
<feature type="chain" id="PRO_0000461582" description="Threonine synthase">
    <location>
        <begin position="1"/>
        <end position="547"/>
    </location>
</feature>
<feature type="binding site" evidence="1">
    <location>
        <position position="272"/>
    </location>
    <ligand>
        <name>pyridoxal 5'-phosphate</name>
        <dbReference type="ChEBI" id="CHEBI:597326"/>
    </ligand>
</feature>
<feature type="binding site" evidence="1">
    <location>
        <position position="273"/>
    </location>
    <ligand>
        <name>pyridoxal 5'-phosphate</name>
        <dbReference type="ChEBI" id="CHEBI:597326"/>
    </ligand>
</feature>
<feature type="binding site" evidence="1">
    <location>
        <position position="274"/>
    </location>
    <ligand>
        <name>pyridoxal 5'-phosphate</name>
        <dbReference type="ChEBI" id="CHEBI:597326"/>
    </ligand>
</feature>
<feature type="binding site" evidence="1">
    <location>
        <position position="276"/>
    </location>
    <ligand>
        <name>pyridoxal 5'-phosphate</name>
        <dbReference type="ChEBI" id="CHEBI:597326"/>
    </ligand>
</feature>
<feature type="binding site" evidence="1">
    <location>
        <position position="471"/>
    </location>
    <ligand>
        <name>pyridoxal 5'-phosphate</name>
        <dbReference type="ChEBI" id="CHEBI:597326"/>
    </ligand>
</feature>
<feature type="modified residue" description="N6-(pyridoxal phosphate)lysine" evidence="2">
    <location>
        <position position="117"/>
    </location>
</feature>
<sequence length="547" mass="60942">MAQEMRYFSTRGGKETLSFEDAVLTGLAPNGGLYIPTHIPALPKDWKTKWAGLSFPELSHEILSLFVPTSVIPSDDLQSIINTAYSSFRSPATTPIRQTGDNEYVLELWHGPTWAFKDVALQFLGELFRYFLERRNKDKTEDMEELTVVGATSGDTGSAAIYGLRSKPSITIFILYPDGRVSPIQEAQMATVPDANVYCVAVEDSDFDTCQSIVKTLFSDAQFNATHRLGAINSINWARILAQIVYYFSAYFQLPEEARKDGAKLQFVVPTGNFGDILAGWYAKKLGLPMEQLVVATNENDILERFFRTGRYEADDAVQQDQTAETAAVNGSSDGQQAVSAVKATHSPAMDILLSSNFERLLYYLALETNGTEGSDEEKRFKAQERLNDWMSTLKKDGKVDLGEDVRQAAGKDFWAERVSDGQTLEEIQKYYRREKYGPYVVDPHTAVGLTAQERSAKKASPDTTWITLSTAHPAKFSGAVELALSASEFPDFDFRRDVLPDELKKLEGLEKRVHRVKGEEGVRALIEKVKSASHEKVDAEEGRGSL</sequence>
<keyword id="KW-0028">Amino-acid biosynthesis</keyword>
<keyword id="KW-0456">Lyase</keyword>
<keyword id="KW-0663">Pyridoxal phosphate</keyword>
<keyword id="KW-0791">Threonine biosynthesis</keyword>
<reference evidence="6" key="1">
    <citation type="journal article" date="2008" name="Microbiology">
        <title>Threonine biosynthetic genes are essential in Cryptococcus neoformans.</title>
        <authorList>
            <person name="Kingsbury J.M."/>
            <person name="McCusker J.H."/>
        </authorList>
    </citation>
    <scope>NUCLEOTIDE SEQUENCE [MRNA]</scope>
    <scope>FUNCTION</scope>
    <scope>PATHWAY</scope>
    <source>
        <strain evidence="4">H99 / ATCC 208821 / CBS 10515 / FGSC 9487</strain>
    </source>
</reference>
<reference evidence="8" key="2">
    <citation type="journal article" date="2014" name="PLoS Genet.">
        <title>Analysis of the genome and transcriptome of Cryptococcus neoformans var. grubii reveals complex RNA expression and microevolution leading to virulence attenuation.</title>
        <authorList>
            <person name="Janbon G."/>
            <person name="Ormerod K.L."/>
            <person name="Paulet D."/>
            <person name="Byrnes E.J. III"/>
            <person name="Yadav V."/>
            <person name="Chatterjee G."/>
            <person name="Mullapudi N."/>
            <person name="Hon C.-C."/>
            <person name="Billmyre R.B."/>
            <person name="Brunel F."/>
            <person name="Bahn Y.-S."/>
            <person name="Chen W."/>
            <person name="Chen Y."/>
            <person name="Chow E.W.L."/>
            <person name="Coppee J.-Y."/>
            <person name="Floyd-Averette A."/>
            <person name="Gaillardin C."/>
            <person name="Gerik K.J."/>
            <person name="Goldberg J."/>
            <person name="Gonzalez-Hilarion S."/>
            <person name="Gujja S."/>
            <person name="Hamlin J.L."/>
            <person name="Hsueh Y.-P."/>
            <person name="Ianiri G."/>
            <person name="Jones S."/>
            <person name="Kodira C.D."/>
            <person name="Kozubowski L."/>
            <person name="Lam W."/>
            <person name="Marra M."/>
            <person name="Mesner L.D."/>
            <person name="Mieczkowski P.A."/>
            <person name="Moyrand F."/>
            <person name="Nielsen K."/>
            <person name="Proux C."/>
            <person name="Rossignol T."/>
            <person name="Schein J.E."/>
            <person name="Sun S."/>
            <person name="Wollschlaeger C."/>
            <person name="Wood I.A."/>
            <person name="Zeng Q."/>
            <person name="Neuveglise C."/>
            <person name="Newlon C.S."/>
            <person name="Perfect J.R."/>
            <person name="Lodge J.K."/>
            <person name="Idnurm A."/>
            <person name="Stajich J.E."/>
            <person name="Kronstad J.W."/>
            <person name="Sanyal K."/>
            <person name="Heitman J."/>
            <person name="Fraser J.A."/>
            <person name="Cuomo C.A."/>
            <person name="Dietrich F.S."/>
        </authorList>
    </citation>
    <scope>NUCLEOTIDE SEQUENCE [LARGE SCALE GENOMIC DNA]</scope>
    <source>
        <strain evidence="8">H99 / ATCC 208821 / CBS 10515 / FGSC 9487</strain>
    </source>
</reference>
<dbReference type="EC" id="4.2.3.1" evidence="1"/>
<dbReference type="EMBL" id="EU635873">
    <property type="protein sequence ID" value="ACC94295.1"/>
    <property type="molecule type" value="mRNA"/>
</dbReference>
<dbReference type="EMBL" id="CP003821">
    <property type="protein sequence ID" value="AFR93116.1"/>
    <property type="molecule type" value="Genomic_DNA"/>
</dbReference>
<dbReference type="RefSeq" id="XP_012047339.1">
    <property type="nucleotide sequence ID" value="XM_012191949.1"/>
</dbReference>
<dbReference type="GeneID" id="23887090"/>
<dbReference type="KEGG" id="cng:CNAG_03612"/>
<dbReference type="VEuPathDB" id="FungiDB:CNAG_03612"/>
<dbReference type="HOGENOM" id="CLU_015170_1_0_1"/>
<dbReference type="OrthoDB" id="2026at5206"/>
<dbReference type="UniPathway" id="UPA00050">
    <property type="reaction ID" value="UER00065"/>
</dbReference>
<dbReference type="Proteomes" id="UP000010091">
    <property type="component" value="Chromosome 2"/>
</dbReference>
<dbReference type="GO" id="GO:0030170">
    <property type="term" value="F:pyridoxal phosphate binding"/>
    <property type="evidence" value="ECO:0000250"/>
    <property type="project" value="UniProtKB"/>
</dbReference>
<dbReference type="GO" id="GO:0004795">
    <property type="term" value="F:threonine synthase activity"/>
    <property type="evidence" value="ECO:0000316"/>
    <property type="project" value="UniProtKB"/>
</dbReference>
<dbReference type="GO" id="GO:0009088">
    <property type="term" value="P:threonine biosynthetic process"/>
    <property type="evidence" value="ECO:0000316"/>
    <property type="project" value="UniProtKB"/>
</dbReference>
<dbReference type="CDD" id="cd01560">
    <property type="entry name" value="Thr-synth_2"/>
    <property type="match status" value="1"/>
</dbReference>
<dbReference type="FunFam" id="3.40.50.1100:FF:000046">
    <property type="entry name" value="THR4p Threonine synthase"/>
    <property type="match status" value="1"/>
</dbReference>
<dbReference type="FunFam" id="3.90.1380.10:FF:000003">
    <property type="entry name" value="THR4p Threonine synthase"/>
    <property type="match status" value="1"/>
</dbReference>
<dbReference type="Gene3D" id="3.40.50.1100">
    <property type="match status" value="2"/>
</dbReference>
<dbReference type="Gene3D" id="3.90.1380.10">
    <property type="entry name" value="Threonine synthase, N-terminal domain"/>
    <property type="match status" value="1"/>
</dbReference>
<dbReference type="InterPro" id="IPR000634">
    <property type="entry name" value="Ser/Thr_deHydtase_PyrdxlP-BS"/>
</dbReference>
<dbReference type="InterPro" id="IPR029144">
    <property type="entry name" value="Thr_synth_N"/>
</dbReference>
<dbReference type="InterPro" id="IPR037158">
    <property type="entry name" value="Thr_synth_N_sf"/>
</dbReference>
<dbReference type="InterPro" id="IPR004450">
    <property type="entry name" value="Thr_synthase-like"/>
</dbReference>
<dbReference type="InterPro" id="IPR051166">
    <property type="entry name" value="Threonine_Synthase"/>
</dbReference>
<dbReference type="InterPro" id="IPR001926">
    <property type="entry name" value="TrpB-like_PALP"/>
</dbReference>
<dbReference type="InterPro" id="IPR036052">
    <property type="entry name" value="TrpB-like_PALP_sf"/>
</dbReference>
<dbReference type="NCBIfam" id="TIGR00260">
    <property type="entry name" value="thrC"/>
    <property type="match status" value="1"/>
</dbReference>
<dbReference type="PANTHER" id="PTHR42690">
    <property type="entry name" value="THREONINE SYNTHASE FAMILY MEMBER"/>
    <property type="match status" value="1"/>
</dbReference>
<dbReference type="PANTHER" id="PTHR42690:SF1">
    <property type="entry name" value="THREONINE SYNTHASE-LIKE 2"/>
    <property type="match status" value="1"/>
</dbReference>
<dbReference type="Pfam" id="PF00291">
    <property type="entry name" value="PALP"/>
    <property type="match status" value="1"/>
</dbReference>
<dbReference type="Pfam" id="PF24857">
    <property type="entry name" value="THR4_C"/>
    <property type="match status" value="1"/>
</dbReference>
<dbReference type="Pfam" id="PF14821">
    <property type="entry name" value="Thr_synth_N"/>
    <property type="match status" value="1"/>
</dbReference>
<dbReference type="SUPFAM" id="SSF53686">
    <property type="entry name" value="Tryptophan synthase beta subunit-like PLP-dependent enzymes"/>
    <property type="match status" value="1"/>
</dbReference>
<dbReference type="PROSITE" id="PS00165">
    <property type="entry name" value="DEHYDRATASE_SER_THR"/>
    <property type="match status" value="1"/>
</dbReference>
<protein>
    <recommendedName>
        <fullName evidence="5">Threonine synthase</fullName>
        <shortName evidence="5">TS</shortName>
        <ecNumber evidence="1">4.2.3.1</ecNumber>
    </recommendedName>
</protein>
<proteinExistence type="evidence at transcript level"/>
<gene>
    <name evidence="4" type="primary">THR4</name>
    <name evidence="7" type="ORF">CNAG_03612</name>
</gene>
<evidence type="ECO:0000250" key="1">
    <source>
        <dbReference type="UniProtKB" id="P16120"/>
    </source>
</evidence>
<evidence type="ECO:0000255" key="2">
    <source>
        <dbReference type="PIRSR" id="PIRSR604450-51"/>
    </source>
</evidence>
<evidence type="ECO:0000269" key="3">
    <source>
    </source>
</evidence>
<evidence type="ECO:0000303" key="4">
    <source>
    </source>
</evidence>
<evidence type="ECO:0000305" key="5"/>
<evidence type="ECO:0000312" key="6">
    <source>
        <dbReference type="EMBL" id="ACC94295.1"/>
    </source>
</evidence>
<evidence type="ECO:0000312" key="7">
    <source>
        <dbReference type="EMBL" id="AFR93116.1"/>
    </source>
</evidence>
<evidence type="ECO:0000312" key="8">
    <source>
        <dbReference type="Proteomes" id="UP000010091"/>
    </source>
</evidence>
<comment type="function">
    <text evidence="3">Catalyzes the gamma-elimination of phosphate from L-phosphohomoserine and the beta-addition of water to produce L-threonine.</text>
</comment>
<comment type="catalytic activity">
    <reaction evidence="1">
        <text>O-phospho-L-homoserine + H2O = L-threonine + phosphate</text>
        <dbReference type="Rhea" id="RHEA:10840"/>
        <dbReference type="ChEBI" id="CHEBI:15377"/>
        <dbReference type="ChEBI" id="CHEBI:43474"/>
        <dbReference type="ChEBI" id="CHEBI:57590"/>
        <dbReference type="ChEBI" id="CHEBI:57926"/>
        <dbReference type="EC" id="4.2.3.1"/>
    </reaction>
    <physiologicalReaction direction="left-to-right" evidence="1">
        <dbReference type="Rhea" id="RHEA:10841"/>
    </physiologicalReaction>
</comment>
<comment type="cofactor">
    <cofactor evidence="1">
        <name>pyridoxal 5'-phosphate</name>
        <dbReference type="ChEBI" id="CHEBI:597326"/>
    </cofactor>
</comment>
<comment type="pathway">
    <text evidence="3">Amino-acid biosynthesis; L-threonine biosynthesis; L-threonine from L-aspartate: step 5/5.</text>
</comment>
<comment type="similarity">
    <text evidence="5">Belongs to the threonine synthase family.</text>
</comment>
<accession>J9VI85</accession>
<accession>B2MW84</accession>